<reference key="1">
    <citation type="journal article" date="1995" name="Mol. Plant Microbe Interact.">
        <title>The HrpZ proteins of Pseudomonas syringae pvs. syringae, glycinea, and tomato are encoded by an operon containing Yersinia ysc homologs and elicit the hypersensitive response in tomato but not soybean.</title>
        <authorList>
            <person name="Preston G."/>
            <person name="Huang H.-C."/>
            <person name="He S.Y."/>
            <person name="Collmer A."/>
        </authorList>
    </citation>
    <scope>NUCLEOTIDE SEQUENCE [GENOMIC DNA]</scope>
    <source>
        <strain>ATCC BAA-871 / DC3000</strain>
    </source>
</reference>
<reference key="2">
    <citation type="journal article" date="2003" name="Mol. Plant Microbe Interact.">
        <title>A Pseudomonas syringae pv. tomato DC3000 Hrp (type III secretion) deletion mutant expressing the Hrp system of bean pathogen P. syringae pv. syringae 61 retains normal host specificity for tomato.</title>
        <authorList>
            <person name="Fouts D.E."/>
            <person name="Badel J.L."/>
            <person name="Ramos A.R."/>
            <person name="Rapp R.A."/>
            <person name="Collmer A."/>
        </authorList>
    </citation>
    <scope>NUCLEOTIDE SEQUENCE [GENOMIC DNA]</scope>
    <source>
        <strain>ATCC BAA-871 / DC3000</strain>
    </source>
</reference>
<reference key="3">
    <citation type="submission" date="2003-06" db="EMBL/GenBank/DDBJ databases">
        <title>Phylogenic analysis of DNA sequences around the hrpZ regions of Pseudomonas syringae.</title>
        <authorList>
            <person name="Inoue Y."/>
            <person name="Takikawa Y."/>
        </authorList>
    </citation>
    <scope>NUCLEOTIDE SEQUENCE [GENOMIC DNA]</scope>
    <source>
        <strain>ICMP 2844</strain>
    </source>
</reference>
<reference key="4">
    <citation type="journal article" date="2003" name="Proc. Natl. Acad. Sci. U.S.A.">
        <title>The complete genome sequence of the Arabidopsis and tomato pathogen Pseudomonas syringae pv. tomato DC3000.</title>
        <authorList>
            <person name="Buell C.R."/>
            <person name="Joardar V."/>
            <person name="Lindeberg M."/>
            <person name="Selengut J."/>
            <person name="Paulsen I.T."/>
            <person name="Gwinn M.L."/>
            <person name="Dodson R.J."/>
            <person name="DeBoy R.T."/>
            <person name="Durkin A.S."/>
            <person name="Kolonay J.F."/>
            <person name="Madupu R."/>
            <person name="Daugherty S.C."/>
            <person name="Brinkac L.M."/>
            <person name="Beanan M.J."/>
            <person name="Haft D.H."/>
            <person name="Nelson W.C."/>
            <person name="Davidsen T.M."/>
            <person name="Zafar N."/>
            <person name="Zhou L."/>
            <person name="Liu J."/>
            <person name="Yuan Q."/>
            <person name="Khouri H.M."/>
            <person name="Fedorova N.B."/>
            <person name="Tran B."/>
            <person name="Russell D."/>
            <person name="Berry K.J."/>
            <person name="Utterback T.R."/>
            <person name="Van Aken S.E."/>
            <person name="Feldblyum T.V."/>
            <person name="D'Ascenzo M."/>
            <person name="Deng W.-L."/>
            <person name="Ramos A.R."/>
            <person name="Alfano J.R."/>
            <person name="Cartinhour S."/>
            <person name="Chatterjee A.K."/>
            <person name="Delaney T.P."/>
            <person name="Lazarowitz S.G."/>
            <person name="Martin G.B."/>
            <person name="Schneider D.J."/>
            <person name="Tang X."/>
            <person name="Bender C.L."/>
            <person name="White O."/>
            <person name="Fraser C.M."/>
            <person name="Collmer A."/>
        </authorList>
    </citation>
    <scope>NUCLEOTIDE SEQUENCE [LARGE SCALE GENOMIC DNA]</scope>
    <source>
        <strain>ATCC BAA-871 / DC3000</strain>
    </source>
</reference>
<reference key="5">
    <citation type="journal article" date="1997" name="FEBS Lett.">
        <title>Purified HrpA of Pseudomonas syringae pv. tomato DC3000 reassembles into pili.</title>
        <authorList>
            <person name="Roine E."/>
            <person name="Saarinen J."/>
            <person name="Kalkkinen N."/>
            <person name="Romantschuk M."/>
        </authorList>
    </citation>
    <scope>PROTEIN SEQUENCE OF 2-11; 16-25 AND 35-50</scope>
    <scope>MASS SPECTROMETRY</scope>
    <scope>FUNCTION</scope>
    <source>
        <strain>ATCC BAA-871 / DC3000</strain>
    </source>
</reference>
<reference key="6">
    <citation type="journal article" date="1997" name="Proc. Natl. Acad. Sci. U.S.A.">
        <title>Hrp pilus: an hrp-dependent bacterial surface appendage produced by Pseudomonas syringae pv. tomato DC3000.</title>
        <authorList>
            <person name="Roine E."/>
            <person name="Wei W."/>
            <person name="Yuan J."/>
            <person name="Nurmiaho-Lassila E.-L."/>
            <person name="Kalkkinen N."/>
            <person name="Romantschuk M."/>
            <person name="He S.Y."/>
        </authorList>
    </citation>
    <scope>PROTEIN SEQUENCE OF 2-36</scope>
    <scope>FUNCTION</scope>
    <source>
        <strain>ATCC BAA-871 / DC3000</strain>
    </source>
</reference>
<reference key="7">
    <citation type="journal article" date="1999" name="Mol. Microbiol.">
        <title>Mutational analysis of the Pseudomonas syringae pv. tomato hrpA gene encoding Hrp pilus subunit.</title>
        <authorList>
            <person name="Taira S."/>
            <person name="Tuimala J."/>
            <person name="Roine E."/>
            <person name="Nurmiaho-Lassila E.-L."/>
            <person name="Savilahti H."/>
            <person name="Romantschuk M."/>
        </authorList>
    </citation>
    <scope>MUTAGENESIS</scope>
    <source>
        <strain>ATCC BAA-871 / DC3000</strain>
    </source>
</reference>
<reference key="8">
    <citation type="journal article" date="2000" name="Proc. Natl. Acad. Sci. U.S.A.">
        <title>The gene coding for the Hrp pilus structural protein is required for type III secretion of Hrp and Avr proteins in Pseudomonas syringae pv. tomato.</title>
        <authorList>
            <person name="Wei W."/>
            <person name="Plovanich-Jones A."/>
            <person name="Deng W.-L."/>
            <person name="Jin Q.-L."/>
            <person name="Collmer A."/>
            <person name="Huang H.-C."/>
            <person name="He S.Y."/>
        </authorList>
    </citation>
    <scope>FUNCTION</scope>
    <scope>REGULATION OF HRP-ASSOCIATED GENES</scope>
    <scope>MUTAGENESIS OF GLY-23; ALA-54; LYS-93; GLU-94; ASP-95; ILE-101 AND ILE-111</scope>
    <source>
        <strain>ATCC BAA-871 / DC3000</strain>
    </source>
</reference>
<reference key="9">
    <citation type="journal article" date="2001" name="Mol. Microbiol.">
        <title>Visualization of secreted Hrp and Avr proteins along the Hrp pilus during type III secretion in Erwinia amylovora and Pseudomonas syringae.</title>
        <authorList>
            <person name="Jin Q.-L."/>
            <person name="Hu W."/>
            <person name="Brown I."/>
            <person name="McGhee G."/>
            <person name="Hart P."/>
            <person name="Jones A.L."/>
            <person name="He S.Y."/>
        </authorList>
    </citation>
    <scope>FUNCTION OF HRP PILUS</scope>
    <source>
        <strain>ATCC BAA-871 / DC3000</strain>
    </source>
</reference>
<reference key="10">
    <citation type="journal article" date="2001" name="Science">
        <title>Role of the Hrp pilus in type III protein secretion in Pseudomonas syringae.</title>
        <authorList>
            <person name="Jin Q.-L."/>
            <person name="He S.Y."/>
        </authorList>
    </citation>
    <scope>FUNCTION OF HRP PILUS</scope>
    <source>
        <strain>ATCC BAA-871 / DC3000</strain>
    </source>
</reference>
<reference key="11">
    <citation type="journal article" date="2002" name="Mol. Genet. Genomics">
        <title>mRNA stability and the secretion signal of HrpA, a pilin secreted by the type III system in Pseudomonas syringae.</title>
        <authorList>
            <person name="Hienonen E."/>
            <person name="Roine E."/>
            <person name="Romantschuk M."/>
            <person name="Taira S."/>
        </authorList>
    </citation>
    <scope>SECRETION SIGNAL</scope>
    <source>
        <strain>ATCC BAA-871 / DC3000</strain>
    </source>
</reference>
<keyword id="KW-0903">Direct protein sequencing</keyword>
<keyword id="KW-0281">Fimbrium</keyword>
<keyword id="KW-1185">Reference proteome</keyword>
<keyword id="KW-0964">Secreted</keyword>
<keyword id="KW-0843">Virulence</keyword>
<protein>
    <recommendedName>
        <fullName>Hrp pili protein HrpA</fullName>
    </recommendedName>
    <alternativeName>
        <fullName>T3SS pilin HrpA</fullName>
    </alternativeName>
</protein>
<feature type="initiator methionine" description="Removed" evidence="4 5">
    <location>
        <position position="1"/>
    </location>
</feature>
<feature type="chain" id="PRO_0000219574" description="Hrp pili protein HrpA">
    <location>
        <begin position="2"/>
        <end position="113"/>
    </location>
</feature>
<feature type="mutagenesis site" description="No effect." evidence="1">
    <original>G</original>
    <variation>A</variation>
    <location>
        <position position="23"/>
    </location>
</feature>
<feature type="mutagenesis site" description="No effect." evidence="1">
    <original>A</original>
    <variation>E</variation>
    <location>
        <position position="54"/>
    </location>
</feature>
<feature type="mutagenesis site" description="No effect." evidence="1">
    <original>K</original>
    <variation>I</variation>
    <location>
        <position position="93"/>
    </location>
</feature>
<feature type="mutagenesis site" description="Affects the regulatory function." evidence="1">
    <original>E</original>
    <variation>K</variation>
    <location>
        <position position="94"/>
    </location>
</feature>
<feature type="mutagenesis site" description="Affects the secretion function." evidence="1">
    <original>D</original>
    <variation>S</variation>
    <location>
        <position position="95"/>
    </location>
</feature>
<feature type="mutagenesis site" description="No effect." evidence="1">
    <original>I</original>
    <variation>T</variation>
    <location>
        <position position="101"/>
    </location>
</feature>
<feature type="mutagenesis site" description="Affects the secretion function." evidence="1">
    <original>I</original>
    <variation>P</variation>
    <location>
        <position position="111"/>
    </location>
</feature>
<proteinExistence type="evidence at protein level"/>
<evidence type="ECO:0000269" key="1">
    <source>
    </source>
</evidence>
<evidence type="ECO:0000269" key="2">
    <source>
    </source>
</evidence>
<evidence type="ECO:0000269" key="3">
    <source>
    </source>
</evidence>
<evidence type="ECO:0000269" key="4">
    <source>
    </source>
</evidence>
<evidence type="ECO:0000269" key="5">
    <source>
    </source>
</evidence>
<evidence type="ECO:0000305" key="6"/>
<name>HRPA_PSESM</name>
<sequence>MVAFAGLTSKLTNLGNSAVGGVGGALQGVNTVASNATLQKNILLGTGDSLSVDAQAKASKESDANGAKLIAMQAQETMKKQTMDVLNAIQAGKEDSTNKKISATATNAKGISY</sequence>
<gene>
    <name type="primary">hrpA</name>
    <name type="synonym">hrpA1</name>
    <name type="ordered locus">PSPTO_1381</name>
</gene>
<organism>
    <name type="scientific">Pseudomonas syringae pv. tomato (strain ATCC BAA-871 / DC3000)</name>
    <dbReference type="NCBI Taxonomy" id="223283"/>
    <lineage>
        <taxon>Bacteria</taxon>
        <taxon>Pseudomonadati</taxon>
        <taxon>Pseudomonadota</taxon>
        <taxon>Gammaproteobacteria</taxon>
        <taxon>Pseudomonadales</taxon>
        <taxon>Pseudomonadaceae</taxon>
        <taxon>Pseudomonas</taxon>
    </lineage>
</organism>
<comment type="function">
    <text evidence="1 2 3 4 5">Major structural protein of the Hrp pilus, which is a component of the type III secretion system (T3SS, Hrp secretion system) required for effector protein delivery, parasitism, and pathogenicity. Required for secretion of virulence proteins such as HrpW and AvrPto. The Hrp pilus functions as a conduit for protein delivery into the host cell. Also, affects the expression of T3SS-associated genes. Required for full expression of genes that encode regulatory, secretion, and effector proteins of the T3SS. HrpA-mediated gene regulation apparently is through effect on the mRNA level of hrpR and hrpS.</text>
</comment>
<comment type="subcellular location">
    <subcellularLocation>
        <location>Secreted</location>
    </subcellularLocation>
    <subcellularLocation>
        <location>Fimbrium</location>
    </subcellularLocation>
    <text>Extracellular, secreted via type III secretion system.</text>
</comment>
<comment type="induction">
    <text>Expression enhanced by contact with host cell wall. Also regulated by HrpRS and HrpL.</text>
</comment>
<comment type="PTM">
    <text>HrpA might be cleaved/degraded in 3 forms but it is not known if the observed processing has any biological significance.</text>
</comment>
<comment type="mass spectrometry"/>
<comment type="miscellaneous">
    <text>Analysis of mutants revealed that the C-terminus is important for pilus assembly and secretion and / or regulation function of HprA.</text>
</comment>
<comment type="similarity">
    <text evidence="6">Belongs to the HrpA type 1 family.</text>
</comment>
<accession>Q52473</accession>
<accession>Q7C4I1</accession>
<dbReference type="EMBL" id="AF232004">
    <property type="protein sequence ID" value="AAB00126.1"/>
    <property type="molecule type" value="Genomic_DNA"/>
</dbReference>
<dbReference type="EMBL" id="AB112567">
    <property type="protein sequence ID" value="BAD20879.1"/>
    <property type="molecule type" value="Genomic_DNA"/>
</dbReference>
<dbReference type="EMBL" id="AE016853">
    <property type="protein sequence ID" value="AAO54903.1"/>
    <property type="molecule type" value="Genomic_DNA"/>
</dbReference>
<dbReference type="RefSeq" id="NP_791208.1">
    <property type="nucleotide sequence ID" value="NC_004578.1"/>
</dbReference>
<dbReference type="RefSeq" id="WP_005763904.1">
    <property type="nucleotide sequence ID" value="NC_004578.1"/>
</dbReference>
<dbReference type="SMR" id="Q52473"/>
<dbReference type="STRING" id="223283.PSPTO_1381"/>
<dbReference type="GeneID" id="1183017"/>
<dbReference type="KEGG" id="pst:PSPTO_1381"/>
<dbReference type="PATRIC" id="fig|223283.9.peg.1403"/>
<dbReference type="eggNOG" id="ENOG5032GQ2">
    <property type="taxonomic scope" value="Bacteria"/>
</dbReference>
<dbReference type="HOGENOM" id="CLU_2131313_0_0_6"/>
<dbReference type="OrthoDB" id="7025161at2"/>
<dbReference type="Proteomes" id="UP000002515">
    <property type="component" value="Chromosome"/>
</dbReference>
<dbReference type="GO" id="GO:0005615">
    <property type="term" value="C:extracellular space"/>
    <property type="evidence" value="ECO:0007669"/>
    <property type="project" value="InterPro"/>
</dbReference>
<dbReference type="GO" id="GO:0009289">
    <property type="term" value="C:pilus"/>
    <property type="evidence" value="ECO:0007669"/>
    <property type="project" value="UniProtKB-SubCell"/>
</dbReference>
<dbReference type="InterPro" id="IPR018581">
    <property type="entry name" value="T3SS_pilus_HrpA"/>
</dbReference>
<dbReference type="Pfam" id="PF09589">
    <property type="entry name" value="HrpA_pilin"/>
    <property type="match status" value="1"/>
</dbReference>